<comment type="similarity">
    <text evidence="2">Belongs to the UPF0337 (CsbD) family.</text>
</comment>
<accession>Q88WD3</accession>
<accession>F9UP70</accession>
<reference key="1">
    <citation type="journal article" date="2003" name="Proc. Natl. Acad. Sci. U.S.A.">
        <title>Complete genome sequence of Lactobacillus plantarum WCFS1.</title>
        <authorList>
            <person name="Kleerebezem M."/>
            <person name="Boekhorst J."/>
            <person name="van Kranenburg R."/>
            <person name="Molenaar D."/>
            <person name="Kuipers O.P."/>
            <person name="Leer R."/>
            <person name="Tarchini R."/>
            <person name="Peters S.A."/>
            <person name="Sandbrink H.M."/>
            <person name="Fiers M.W.E.J."/>
            <person name="Stiekema W."/>
            <person name="Klein Lankhorst R.M."/>
            <person name="Bron P.A."/>
            <person name="Hoffer S.M."/>
            <person name="Nierop Groot M.N."/>
            <person name="Kerkhoven R."/>
            <person name="De Vries M."/>
            <person name="Ursing B."/>
            <person name="De Vos W.M."/>
            <person name="Siezen R.J."/>
        </authorList>
    </citation>
    <scope>NUCLEOTIDE SEQUENCE [LARGE SCALE GENOMIC DNA]</scope>
    <source>
        <strain>ATCC BAA-793 / NCIMB 8826 / WCFS1</strain>
    </source>
</reference>
<reference key="2">
    <citation type="journal article" date="2012" name="J. Bacteriol.">
        <title>Complete resequencing and reannotation of the Lactobacillus plantarum WCFS1 genome.</title>
        <authorList>
            <person name="Siezen R.J."/>
            <person name="Francke C."/>
            <person name="Renckens B."/>
            <person name="Boekhorst J."/>
            <person name="Wels M."/>
            <person name="Kleerebezem M."/>
            <person name="van Hijum S.A."/>
        </authorList>
    </citation>
    <scope>NUCLEOTIDE SEQUENCE [LARGE SCALE GENOMIC DNA]</scope>
    <scope>GENOME REANNOTATION</scope>
    <source>
        <strain>ATCC BAA-793 / NCIMB 8826 / WCFS1</strain>
    </source>
</reference>
<dbReference type="EMBL" id="AL935263">
    <property type="protein sequence ID" value="CCC79009.1"/>
    <property type="molecule type" value="Genomic_DNA"/>
</dbReference>
<dbReference type="RefSeq" id="WP_003640447.1">
    <property type="nucleotide sequence ID" value="NC_004567.2"/>
</dbReference>
<dbReference type="RefSeq" id="YP_004889523.1">
    <property type="nucleotide sequence ID" value="NC_004567.2"/>
</dbReference>
<dbReference type="SMR" id="Q88WD3"/>
<dbReference type="STRING" id="220668.lp_1708"/>
<dbReference type="EnsemblBacteria" id="CCC79009">
    <property type="protein sequence ID" value="CCC79009"/>
    <property type="gene ID" value="lp_1708"/>
</dbReference>
<dbReference type="KEGG" id="lpl:lp_1708"/>
<dbReference type="PATRIC" id="fig|220668.9.peg.1443"/>
<dbReference type="eggNOG" id="COG3237">
    <property type="taxonomic scope" value="Bacteria"/>
</dbReference>
<dbReference type="HOGENOM" id="CLU_135567_0_2_9"/>
<dbReference type="OrthoDB" id="2315701at2"/>
<dbReference type="PhylomeDB" id="Q88WD3"/>
<dbReference type="Proteomes" id="UP000000432">
    <property type="component" value="Chromosome"/>
</dbReference>
<dbReference type="Gene3D" id="1.10.1470.10">
    <property type="entry name" value="YjbJ"/>
    <property type="match status" value="1"/>
</dbReference>
<dbReference type="InterPro" id="IPR008462">
    <property type="entry name" value="CsbD"/>
</dbReference>
<dbReference type="InterPro" id="IPR036629">
    <property type="entry name" value="YjbJ_sf"/>
</dbReference>
<dbReference type="Pfam" id="PF05532">
    <property type="entry name" value="CsbD"/>
    <property type="match status" value="1"/>
</dbReference>
<dbReference type="SUPFAM" id="SSF69047">
    <property type="entry name" value="Hypothetical protein YjbJ"/>
    <property type="match status" value="1"/>
</dbReference>
<proteinExistence type="inferred from homology"/>
<name>Y1708_LACPL</name>
<keyword id="KW-1185">Reference proteome</keyword>
<organism>
    <name type="scientific">Lactiplantibacillus plantarum (strain ATCC BAA-793 / NCIMB 8826 / WCFS1)</name>
    <name type="common">Lactobacillus plantarum</name>
    <dbReference type="NCBI Taxonomy" id="220668"/>
    <lineage>
        <taxon>Bacteria</taxon>
        <taxon>Bacillati</taxon>
        <taxon>Bacillota</taxon>
        <taxon>Bacilli</taxon>
        <taxon>Lactobacillales</taxon>
        <taxon>Lactobacillaceae</taxon>
        <taxon>Lactiplantibacillus</taxon>
    </lineage>
</organism>
<feature type="chain" id="PRO_0000210007" description="UPF0337 protein lp_1708">
    <location>
        <begin position="1"/>
        <end position="73"/>
    </location>
</feature>
<feature type="region of interest" description="Disordered" evidence="1">
    <location>
        <begin position="1"/>
        <end position="73"/>
    </location>
</feature>
<feature type="compositionally biased region" description="Basic and acidic residues" evidence="1">
    <location>
        <begin position="1"/>
        <end position="35"/>
    </location>
</feature>
<feature type="compositionally biased region" description="Basic and acidic residues" evidence="1">
    <location>
        <begin position="44"/>
        <end position="73"/>
    </location>
</feature>
<evidence type="ECO:0000256" key="1">
    <source>
        <dbReference type="SAM" id="MobiDB-lite"/>
    </source>
</evidence>
<evidence type="ECO:0000305" key="2"/>
<sequence length="73" mass="7987">MSDVNKKFDSKKDQLSGKAKEVEGKVTGDRAREAQGKTQSLMGKAKDKLADAEETVKGVVDEAKDKMKKKSDD</sequence>
<gene>
    <name type="ordered locus">lp_1708</name>
</gene>
<protein>
    <recommendedName>
        <fullName>UPF0337 protein lp_1708</fullName>
    </recommendedName>
</protein>